<accession>B0CH33</accession>
<comment type="function">
    <text evidence="1">Involved in the binding of tRNA to the ribosomes.</text>
</comment>
<comment type="subunit">
    <text evidence="1">Part of the 30S ribosomal subunit.</text>
</comment>
<comment type="similarity">
    <text evidence="1">Belongs to the universal ribosomal protein uS10 family.</text>
</comment>
<gene>
    <name evidence="1" type="primary">rpsJ</name>
    <name type="ordered locus">BSUIS_A1283</name>
</gene>
<keyword id="KW-0687">Ribonucleoprotein</keyword>
<keyword id="KW-0689">Ribosomal protein</keyword>
<feature type="chain" id="PRO_1000081539" description="Small ribosomal subunit protein uS10">
    <location>
        <begin position="1"/>
        <end position="102"/>
    </location>
</feature>
<organism>
    <name type="scientific">Brucella suis (strain ATCC 23445 / NCTC 10510)</name>
    <dbReference type="NCBI Taxonomy" id="470137"/>
    <lineage>
        <taxon>Bacteria</taxon>
        <taxon>Pseudomonadati</taxon>
        <taxon>Pseudomonadota</taxon>
        <taxon>Alphaproteobacteria</taxon>
        <taxon>Hyphomicrobiales</taxon>
        <taxon>Brucellaceae</taxon>
        <taxon>Brucella/Ochrobactrum group</taxon>
        <taxon>Brucella</taxon>
    </lineage>
</organism>
<protein>
    <recommendedName>
        <fullName evidence="1">Small ribosomal subunit protein uS10</fullName>
    </recommendedName>
    <alternativeName>
        <fullName evidence="2">30S ribosomal protein S10</fullName>
    </alternativeName>
</protein>
<proteinExistence type="inferred from homology"/>
<dbReference type="EMBL" id="CP000911">
    <property type="protein sequence ID" value="ABY38334.1"/>
    <property type="molecule type" value="Genomic_DNA"/>
</dbReference>
<dbReference type="RefSeq" id="WP_002964363.1">
    <property type="nucleotide sequence ID" value="NC_010169.1"/>
</dbReference>
<dbReference type="SMR" id="B0CH33"/>
<dbReference type="GeneID" id="97533523"/>
<dbReference type="KEGG" id="bmt:BSUIS_A1283"/>
<dbReference type="HOGENOM" id="CLU_122625_1_3_5"/>
<dbReference type="Proteomes" id="UP000008545">
    <property type="component" value="Chromosome I"/>
</dbReference>
<dbReference type="GO" id="GO:1990904">
    <property type="term" value="C:ribonucleoprotein complex"/>
    <property type="evidence" value="ECO:0007669"/>
    <property type="project" value="UniProtKB-KW"/>
</dbReference>
<dbReference type="GO" id="GO:0005840">
    <property type="term" value="C:ribosome"/>
    <property type="evidence" value="ECO:0007669"/>
    <property type="project" value="UniProtKB-KW"/>
</dbReference>
<dbReference type="GO" id="GO:0003735">
    <property type="term" value="F:structural constituent of ribosome"/>
    <property type="evidence" value="ECO:0007669"/>
    <property type="project" value="InterPro"/>
</dbReference>
<dbReference type="GO" id="GO:0000049">
    <property type="term" value="F:tRNA binding"/>
    <property type="evidence" value="ECO:0007669"/>
    <property type="project" value="UniProtKB-UniRule"/>
</dbReference>
<dbReference type="GO" id="GO:0006412">
    <property type="term" value="P:translation"/>
    <property type="evidence" value="ECO:0007669"/>
    <property type="project" value="UniProtKB-UniRule"/>
</dbReference>
<dbReference type="FunFam" id="3.30.70.600:FF:000001">
    <property type="entry name" value="30S ribosomal protein S10"/>
    <property type="match status" value="1"/>
</dbReference>
<dbReference type="Gene3D" id="3.30.70.600">
    <property type="entry name" value="Ribosomal protein S10 domain"/>
    <property type="match status" value="1"/>
</dbReference>
<dbReference type="HAMAP" id="MF_00508">
    <property type="entry name" value="Ribosomal_uS10"/>
    <property type="match status" value="1"/>
</dbReference>
<dbReference type="InterPro" id="IPR001848">
    <property type="entry name" value="Ribosomal_uS10"/>
</dbReference>
<dbReference type="InterPro" id="IPR018268">
    <property type="entry name" value="Ribosomal_uS10_CS"/>
</dbReference>
<dbReference type="InterPro" id="IPR027486">
    <property type="entry name" value="Ribosomal_uS10_dom"/>
</dbReference>
<dbReference type="InterPro" id="IPR036838">
    <property type="entry name" value="Ribosomal_uS10_dom_sf"/>
</dbReference>
<dbReference type="NCBIfam" id="NF001861">
    <property type="entry name" value="PRK00596.1"/>
    <property type="match status" value="1"/>
</dbReference>
<dbReference type="NCBIfam" id="TIGR01049">
    <property type="entry name" value="rpsJ_bact"/>
    <property type="match status" value="1"/>
</dbReference>
<dbReference type="PANTHER" id="PTHR11700">
    <property type="entry name" value="30S RIBOSOMAL PROTEIN S10 FAMILY MEMBER"/>
    <property type="match status" value="1"/>
</dbReference>
<dbReference type="Pfam" id="PF00338">
    <property type="entry name" value="Ribosomal_S10"/>
    <property type="match status" value="1"/>
</dbReference>
<dbReference type="PRINTS" id="PR00971">
    <property type="entry name" value="RIBOSOMALS10"/>
</dbReference>
<dbReference type="SMART" id="SM01403">
    <property type="entry name" value="Ribosomal_S10"/>
    <property type="match status" value="1"/>
</dbReference>
<dbReference type="SUPFAM" id="SSF54999">
    <property type="entry name" value="Ribosomal protein S10"/>
    <property type="match status" value="1"/>
</dbReference>
<dbReference type="PROSITE" id="PS00361">
    <property type="entry name" value="RIBOSOMAL_S10"/>
    <property type="match status" value="1"/>
</dbReference>
<evidence type="ECO:0000255" key="1">
    <source>
        <dbReference type="HAMAP-Rule" id="MF_00508"/>
    </source>
</evidence>
<evidence type="ECO:0000305" key="2"/>
<name>RS10_BRUSI</name>
<sequence>MNGQNIRIRLKAFDHRILDASTREIVSTAKRTGANVRGPIPLPTRIEKFTVNRSPHIDKKSREQFEMRTHKRLLDIVDPTPQTVDALMKLDLSAGVDVEIKL</sequence>
<reference key="1">
    <citation type="submission" date="2007-12" db="EMBL/GenBank/DDBJ databases">
        <title>Brucella suis ATCC 23445 whole genome shotgun sequencing project.</title>
        <authorList>
            <person name="Setubal J.C."/>
            <person name="Bowns C."/>
            <person name="Boyle S."/>
            <person name="Crasta O.R."/>
            <person name="Czar M.J."/>
            <person name="Dharmanolla C."/>
            <person name="Gillespie J.J."/>
            <person name="Kenyon R.W."/>
            <person name="Lu J."/>
            <person name="Mane S."/>
            <person name="Mohapatra S."/>
            <person name="Nagrani S."/>
            <person name="Purkayastha A."/>
            <person name="Rajasimha H.K."/>
            <person name="Shallom J.M."/>
            <person name="Shallom S."/>
            <person name="Shukla M."/>
            <person name="Snyder E.E."/>
            <person name="Sobral B.W."/>
            <person name="Wattam A.R."/>
            <person name="Will R."/>
            <person name="Williams K."/>
            <person name="Yoo H."/>
            <person name="Bruce D."/>
            <person name="Detter C."/>
            <person name="Munk C."/>
            <person name="Brettin T.S."/>
        </authorList>
    </citation>
    <scope>NUCLEOTIDE SEQUENCE [LARGE SCALE GENOMIC DNA]</scope>
    <source>
        <strain>ATCC 23445 / NCTC 10510</strain>
    </source>
</reference>